<name>RLMD_AROAE</name>
<feature type="chain" id="PRO_0000229870" description="23S rRNA (uracil(1939)-C(5))-methyltransferase RlmD">
    <location>
        <begin position="1"/>
        <end position="433"/>
    </location>
</feature>
<feature type="domain" description="TRAM" evidence="1">
    <location>
        <begin position="1"/>
        <end position="53"/>
    </location>
</feature>
<feature type="active site" description="Nucleophile" evidence="1">
    <location>
        <position position="389"/>
    </location>
</feature>
<feature type="binding site" evidence="1">
    <location>
        <position position="66"/>
    </location>
    <ligand>
        <name>[4Fe-4S] cluster</name>
        <dbReference type="ChEBI" id="CHEBI:49883"/>
    </ligand>
</feature>
<feature type="binding site" evidence="1">
    <location>
        <position position="72"/>
    </location>
    <ligand>
        <name>[4Fe-4S] cluster</name>
        <dbReference type="ChEBI" id="CHEBI:49883"/>
    </ligand>
</feature>
<feature type="binding site" evidence="1">
    <location>
        <position position="75"/>
    </location>
    <ligand>
        <name>[4Fe-4S] cluster</name>
        <dbReference type="ChEBI" id="CHEBI:49883"/>
    </ligand>
</feature>
<feature type="binding site" evidence="1">
    <location>
        <position position="154"/>
    </location>
    <ligand>
        <name>[4Fe-4S] cluster</name>
        <dbReference type="ChEBI" id="CHEBI:49883"/>
    </ligand>
</feature>
<feature type="binding site" evidence="1">
    <location>
        <position position="263"/>
    </location>
    <ligand>
        <name>S-adenosyl-L-methionine</name>
        <dbReference type="ChEBI" id="CHEBI:59789"/>
    </ligand>
</feature>
<feature type="binding site" evidence="1">
    <location>
        <position position="292"/>
    </location>
    <ligand>
        <name>S-adenosyl-L-methionine</name>
        <dbReference type="ChEBI" id="CHEBI:59789"/>
    </ligand>
</feature>
<feature type="binding site" evidence="1">
    <location>
        <position position="297"/>
    </location>
    <ligand>
        <name>S-adenosyl-L-methionine</name>
        <dbReference type="ChEBI" id="CHEBI:59789"/>
    </ligand>
</feature>
<feature type="binding site" evidence="1">
    <location>
        <position position="313"/>
    </location>
    <ligand>
        <name>S-adenosyl-L-methionine</name>
        <dbReference type="ChEBI" id="CHEBI:59789"/>
    </ligand>
</feature>
<feature type="binding site" evidence="1">
    <location>
        <position position="341"/>
    </location>
    <ligand>
        <name>S-adenosyl-L-methionine</name>
        <dbReference type="ChEBI" id="CHEBI:59789"/>
    </ligand>
</feature>
<feature type="binding site" evidence="1">
    <location>
        <position position="362"/>
    </location>
    <ligand>
        <name>S-adenosyl-L-methionine</name>
        <dbReference type="ChEBI" id="CHEBI:59789"/>
    </ligand>
</feature>
<dbReference type="EC" id="2.1.1.190" evidence="1"/>
<dbReference type="EMBL" id="CR555306">
    <property type="protein sequence ID" value="CAI06520.1"/>
    <property type="molecule type" value="Genomic_DNA"/>
</dbReference>
<dbReference type="RefSeq" id="WP_011236254.1">
    <property type="nucleotide sequence ID" value="NC_006513.1"/>
</dbReference>
<dbReference type="SMR" id="Q5P841"/>
<dbReference type="STRING" id="76114.ebA771"/>
<dbReference type="KEGG" id="eba:ebA771"/>
<dbReference type="eggNOG" id="COG2265">
    <property type="taxonomic scope" value="Bacteria"/>
</dbReference>
<dbReference type="HOGENOM" id="CLU_014689_8_2_4"/>
<dbReference type="OrthoDB" id="9804590at2"/>
<dbReference type="Proteomes" id="UP000006552">
    <property type="component" value="Chromosome"/>
</dbReference>
<dbReference type="GO" id="GO:0051539">
    <property type="term" value="F:4 iron, 4 sulfur cluster binding"/>
    <property type="evidence" value="ECO:0007669"/>
    <property type="project" value="UniProtKB-KW"/>
</dbReference>
<dbReference type="GO" id="GO:0005506">
    <property type="term" value="F:iron ion binding"/>
    <property type="evidence" value="ECO:0007669"/>
    <property type="project" value="UniProtKB-UniRule"/>
</dbReference>
<dbReference type="GO" id="GO:0003723">
    <property type="term" value="F:RNA binding"/>
    <property type="evidence" value="ECO:0007669"/>
    <property type="project" value="InterPro"/>
</dbReference>
<dbReference type="GO" id="GO:0070041">
    <property type="term" value="F:rRNA (uridine-C5-)-methyltransferase activity"/>
    <property type="evidence" value="ECO:0007669"/>
    <property type="project" value="UniProtKB-UniRule"/>
</dbReference>
<dbReference type="GO" id="GO:0070475">
    <property type="term" value="P:rRNA base methylation"/>
    <property type="evidence" value="ECO:0007669"/>
    <property type="project" value="TreeGrafter"/>
</dbReference>
<dbReference type="CDD" id="cd02440">
    <property type="entry name" value="AdoMet_MTases"/>
    <property type="match status" value="1"/>
</dbReference>
<dbReference type="FunFam" id="2.40.50.140:FF:000097">
    <property type="entry name" value="23S rRNA (uracil(1939)-C(5))-methyltransferase RlmD"/>
    <property type="match status" value="1"/>
</dbReference>
<dbReference type="Gene3D" id="2.40.50.1070">
    <property type="match status" value="1"/>
</dbReference>
<dbReference type="Gene3D" id="2.40.50.140">
    <property type="entry name" value="Nucleic acid-binding proteins"/>
    <property type="match status" value="1"/>
</dbReference>
<dbReference type="Gene3D" id="3.40.50.150">
    <property type="entry name" value="Vaccinia Virus protein VP39"/>
    <property type="match status" value="1"/>
</dbReference>
<dbReference type="HAMAP" id="MF_01010">
    <property type="entry name" value="23SrRNA_methyltr_RlmD"/>
    <property type="match status" value="1"/>
</dbReference>
<dbReference type="InterPro" id="IPR001566">
    <property type="entry name" value="23S_rRNA_MeTrfase_RlmD"/>
</dbReference>
<dbReference type="InterPro" id="IPR030390">
    <property type="entry name" value="MeTrfase_TrmA_AS"/>
</dbReference>
<dbReference type="InterPro" id="IPR012340">
    <property type="entry name" value="NA-bd_OB-fold"/>
</dbReference>
<dbReference type="InterPro" id="IPR029063">
    <property type="entry name" value="SAM-dependent_MTases_sf"/>
</dbReference>
<dbReference type="InterPro" id="IPR002792">
    <property type="entry name" value="TRAM_dom"/>
</dbReference>
<dbReference type="InterPro" id="IPR010280">
    <property type="entry name" value="U5_MeTrfase_fam"/>
</dbReference>
<dbReference type="NCBIfam" id="NF009639">
    <property type="entry name" value="PRK13168.1"/>
    <property type="match status" value="1"/>
</dbReference>
<dbReference type="PANTHER" id="PTHR11061:SF49">
    <property type="entry name" value="23S RRNA (URACIL(1939)-C(5))-METHYLTRANSFERASE RLMD"/>
    <property type="match status" value="1"/>
</dbReference>
<dbReference type="PANTHER" id="PTHR11061">
    <property type="entry name" value="RNA M5U METHYLTRANSFERASE"/>
    <property type="match status" value="1"/>
</dbReference>
<dbReference type="Pfam" id="PF01938">
    <property type="entry name" value="TRAM"/>
    <property type="match status" value="1"/>
</dbReference>
<dbReference type="Pfam" id="PF05958">
    <property type="entry name" value="tRNA_U5-meth_tr"/>
    <property type="match status" value="1"/>
</dbReference>
<dbReference type="SUPFAM" id="SSF50249">
    <property type="entry name" value="Nucleic acid-binding proteins"/>
    <property type="match status" value="1"/>
</dbReference>
<dbReference type="SUPFAM" id="SSF53335">
    <property type="entry name" value="S-adenosyl-L-methionine-dependent methyltransferases"/>
    <property type="match status" value="1"/>
</dbReference>
<dbReference type="PROSITE" id="PS51687">
    <property type="entry name" value="SAM_MT_RNA_M5U"/>
    <property type="match status" value="1"/>
</dbReference>
<dbReference type="PROSITE" id="PS50926">
    <property type="entry name" value="TRAM"/>
    <property type="match status" value="1"/>
</dbReference>
<dbReference type="PROSITE" id="PS01230">
    <property type="entry name" value="TRMA_1"/>
    <property type="match status" value="1"/>
</dbReference>
<sequence>MPVAVIESLDHEGRGVAHVDGKVVFVEGALAGEQVEYTVYRQRPSYDLAEATRIIKASAQRVRPRCEHFGVCGGCSMQHLDSVAQAAAKQRVLEDALWHVGKVRPDIIYAAIHGPSWGYRYRARIGVRVVPKKGGVLIGFHERRSSYIADMRSCPILPPHVSGMLPALHELVGGLSIADRLPQIEIAIGDTAIVLVFRNLLPLTPADEARLAAFAGEHGVQVWLQPGAPATAHPLHPKGAAPLAYTLPEFDVAMAFQPTDFTQVNIDINRLLIRRSLQLLDPRPGERIADLFCGLGNFSLPIARCGATVVGVEGSESLVRRAAKNARRNGLHGRSEFHAANLFEATEDSLAALGRLDKLLIDPPREGAIAVVKALSTLQSPARIVYVSCNPATLARDAAVLVHEKGYVLRGAGIANMFPQTSHVESIALFERN</sequence>
<comment type="function">
    <text evidence="1">Catalyzes the formation of 5-methyl-uridine at position 1939 (m5U1939) in 23S rRNA.</text>
</comment>
<comment type="catalytic activity">
    <reaction evidence="1">
        <text>uridine(1939) in 23S rRNA + S-adenosyl-L-methionine = 5-methyluridine(1939) in 23S rRNA + S-adenosyl-L-homocysteine + H(+)</text>
        <dbReference type="Rhea" id="RHEA:42908"/>
        <dbReference type="Rhea" id="RHEA-COMP:10278"/>
        <dbReference type="Rhea" id="RHEA-COMP:10279"/>
        <dbReference type="ChEBI" id="CHEBI:15378"/>
        <dbReference type="ChEBI" id="CHEBI:57856"/>
        <dbReference type="ChEBI" id="CHEBI:59789"/>
        <dbReference type="ChEBI" id="CHEBI:65315"/>
        <dbReference type="ChEBI" id="CHEBI:74447"/>
        <dbReference type="EC" id="2.1.1.190"/>
    </reaction>
</comment>
<comment type="similarity">
    <text evidence="1">Belongs to the class I-like SAM-binding methyltransferase superfamily. RNA M5U methyltransferase family. RlmD subfamily.</text>
</comment>
<gene>
    <name evidence="1" type="primary">rlmD</name>
    <name type="synonym">rumA</name>
    <name type="ordered locus">AZOSEA03980</name>
    <name type="ORF">ebA771</name>
</gene>
<organism>
    <name type="scientific">Aromatoleum aromaticum (strain DSM 19018 / LMG 30748 / EbN1)</name>
    <name type="common">Azoarcus sp. (strain EbN1)</name>
    <dbReference type="NCBI Taxonomy" id="76114"/>
    <lineage>
        <taxon>Bacteria</taxon>
        <taxon>Pseudomonadati</taxon>
        <taxon>Pseudomonadota</taxon>
        <taxon>Betaproteobacteria</taxon>
        <taxon>Rhodocyclales</taxon>
        <taxon>Rhodocyclaceae</taxon>
        <taxon>Aromatoleum</taxon>
    </lineage>
</organism>
<keyword id="KW-0004">4Fe-4S</keyword>
<keyword id="KW-0408">Iron</keyword>
<keyword id="KW-0411">Iron-sulfur</keyword>
<keyword id="KW-0479">Metal-binding</keyword>
<keyword id="KW-0489">Methyltransferase</keyword>
<keyword id="KW-1185">Reference proteome</keyword>
<keyword id="KW-0698">rRNA processing</keyword>
<keyword id="KW-0949">S-adenosyl-L-methionine</keyword>
<keyword id="KW-0808">Transferase</keyword>
<proteinExistence type="inferred from homology"/>
<reference key="1">
    <citation type="journal article" date="2005" name="Arch. Microbiol.">
        <title>The genome sequence of an anaerobic aromatic-degrading denitrifying bacterium, strain EbN1.</title>
        <authorList>
            <person name="Rabus R."/>
            <person name="Kube M."/>
            <person name="Heider J."/>
            <person name="Beck A."/>
            <person name="Heitmann K."/>
            <person name="Widdel F."/>
            <person name="Reinhardt R."/>
        </authorList>
    </citation>
    <scope>NUCLEOTIDE SEQUENCE [LARGE SCALE GENOMIC DNA]</scope>
    <source>
        <strain>DSM 19018 / LMG 30748 / EbN1</strain>
    </source>
</reference>
<evidence type="ECO:0000255" key="1">
    <source>
        <dbReference type="HAMAP-Rule" id="MF_01010"/>
    </source>
</evidence>
<accession>Q5P841</accession>
<protein>
    <recommendedName>
        <fullName evidence="1">23S rRNA (uracil(1939)-C(5))-methyltransferase RlmD</fullName>
        <ecNumber evidence="1">2.1.1.190</ecNumber>
    </recommendedName>
    <alternativeName>
        <fullName evidence="1">23S rRNA(m5U1939)-methyltransferase</fullName>
    </alternativeName>
</protein>